<comment type="function">
    <text evidence="1">The pyruvate dehydrogenase complex catalyzes the overall conversion of pyruvate to acetyl-CoA and CO(2). It contains multiple copies of three enzymatic components: pyruvate dehydrogenase (E1), dihydrolipoamide acetyltransferase (E2) and lipoamide dehydrogenase (E3) (By similarity).</text>
</comment>
<comment type="catalytic activity">
    <reaction>
        <text>N(6)-[(R)-lipoyl]-L-lysyl-[protein] + pyruvate + H(+) = N(6)-[(R)-S(8)-acetyldihydrolipoyl]-L-lysyl-[protein] + CO2</text>
        <dbReference type="Rhea" id="RHEA:19189"/>
        <dbReference type="Rhea" id="RHEA-COMP:10474"/>
        <dbReference type="Rhea" id="RHEA-COMP:10478"/>
        <dbReference type="ChEBI" id="CHEBI:15361"/>
        <dbReference type="ChEBI" id="CHEBI:15378"/>
        <dbReference type="ChEBI" id="CHEBI:16526"/>
        <dbReference type="ChEBI" id="CHEBI:83099"/>
        <dbReference type="ChEBI" id="CHEBI:83111"/>
        <dbReference type="EC" id="1.2.4.1"/>
    </reaction>
</comment>
<comment type="cofactor">
    <cofactor evidence="1">
        <name>thiamine diphosphate</name>
        <dbReference type="ChEBI" id="CHEBI:58937"/>
    </cofactor>
</comment>
<comment type="subunit">
    <text evidence="1">Heterodimer of an alpha and a beta chain.</text>
</comment>
<comment type="interaction">
    <interactant intactId="EBI-2259621">
        <id>P75391</id>
    </interactant>
    <interactant intactId="EBI-1058602">
        <id>P02788</id>
        <label>LTF</label>
    </interactant>
    <organismsDiffer>true</organismsDiffer>
    <experiments>3</experiments>
</comment>
<comment type="interaction">
    <interactant intactId="EBI-2259621">
        <id>P75391</id>
    </interactant>
    <interactant intactId="EBI-999394">
        <id>P00747</id>
        <label>PLG</label>
    </interactant>
    <organismsDiffer>true</organismsDiffer>
    <experiments>11</experiments>
</comment>
<comment type="interaction">
    <interactant intactId="EBI-2259621">
        <id>P75391</id>
    </interactant>
    <interactant intactId="EBI-1036653">
        <id>P04004</id>
        <label>VTN</label>
    </interactant>
    <organismsDiffer>true</organismsDiffer>
    <experiments>3</experiments>
</comment>
<dbReference type="EC" id="1.2.4.1"/>
<dbReference type="EMBL" id="U00089">
    <property type="protein sequence ID" value="AAB96094.1"/>
    <property type="molecule type" value="Genomic_DNA"/>
</dbReference>
<dbReference type="PIR" id="S73772">
    <property type="entry name" value="S73772"/>
</dbReference>
<dbReference type="RefSeq" id="NP_110080.1">
    <property type="nucleotide sequence ID" value="NC_000912.1"/>
</dbReference>
<dbReference type="RefSeq" id="WP_010874748.1">
    <property type="nucleotide sequence ID" value="NZ_OU342337.1"/>
</dbReference>
<dbReference type="SMR" id="P75391"/>
<dbReference type="IntAct" id="P75391">
    <property type="interactions" value="7"/>
</dbReference>
<dbReference type="STRING" id="272634.MPN_392"/>
<dbReference type="MoonProt" id="P75391"/>
<dbReference type="EnsemblBacteria" id="AAB96094">
    <property type="protein sequence ID" value="AAB96094"/>
    <property type="gene ID" value="MPN_392"/>
</dbReference>
<dbReference type="GeneID" id="66608949"/>
<dbReference type="KEGG" id="mpn:MPN_392"/>
<dbReference type="PATRIC" id="fig|272634.6.peg.423"/>
<dbReference type="HOGENOM" id="CLU_012907_1_0_14"/>
<dbReference type="OrthoDB" id="8732661at2"/>
<dbReference type="BioCyc" id="MetaCyc:MONOMER-587"/>
<dbReference type="BioCyc" id="MPNE272634:G1GJ3-622-MONOMER"/>
<dbReference type="Proteomes" id="UP000000808">
    <property type="component" value="Chromosome"/>
</dbReference>
<dbReference type="GO" id="GO:0033111">
    <property type="term" value="C:attachment organelle membrane"/>
    <property type="evidence" value="ECO:0000314"/>
    <property type="project" value="CAFA"/>
</dbReference>
<dbReference type="GO" id="GO:0009986">
    <property type="term" value="C:cell surface"/>
    <property type="evidence" value="ECO:0000314"/>
    <property type="project" value="AgBase"/>
</dbReference>
<dbReference type="GO" id="GO:0005829">
    <property type="term" value="C:cytosol"/>
    <property type="evidence" value="ECO:0000314"/>
    <property type="project" value="AgBase"/>
</dbReference>
<dbReference type="GO" id="GO:0009897">
    <property type="term" value="C:external side of plasma membrane"/>
    <property type="evidence" value="ECO:0000314"/>
    <property type="project" value="CAFA"/>
</dbReference>
<dbReference type="GO" id="GO:0016020">
    <property type="term" value="C:membrane"/>
    <property type="evidence" value="ECO:0000314"/>
    <property type="project" value="AgBase"/>
</dbReference>
<dbReference type="GO" id="GO:0001968">
    <property type="term" value="F:fibronectin binding"/>
    <property type="evidence" value="ECO:0000353"/>
    <property type="project" value="CAFA"/>
</dbReference>
<dbReference type="GO" id="GO:0004739">
    <property type="term" value="F:pyruvate dehydrogenase (acetyl-transferring) activity"/>
    <property type="evidence" value="ECO:0007669"/>
    <property type="project" value="UniProtKB-EC"/>
</dbReference>
<dbReference type="GO" id="GO:0031639">
    <property type="term" value="P:plasminogen activation"/>
    <property type="evidence" value="ECO:0000314"/>
    <property type="project" value="AgBase"/>
</dbReference>
<dbReference type="GO" id="GO:0051919">
    <property type="term" value="P:positive regulation of fibrinolysis"/>
    <property type="evidence" value="ECO:0000314"/>
    <property type="project" value="AgBase"/>
</dbReference>
<dbReference type="CDD" id="cd07036">
    <property type="entry name" value="TPP_PYR_E1-PDHc-beta_like"/>
    <property type="match status" value="1"/>
</dbReference>
<dbReference type="FunFam" id="3.40.50.970:FF:000001">
    <property type="entry name" value="Pyruvate dehydrogenase E1 beta subunit"/>
    <property type="match status" value="1"/>
</dbReference>
<dbReference type="FunFam" id="3.40.50.920:FF:000031">
    <property type="entry name" value="Pyruvate dehydrogenase E1 component subunit beta"/>
    <property type="match status" value="1"/>
</dbReference>
<dbReference type="Gene3D" id="3.40.50.920">
    <property type="match status" value="1"/>
</dbReference>
<dbReference type="Gene3D" id="3.40.50.970">
    <property type="match status" value="1"/>
</dbReference>
<dbReference type="InterPro" id="IPR029061">
    <property type="entry name" value="THDP-binding"/>
</dbReference>
<dbReference type="InterPro" id="IPR009014">
    <property type="entry name" value="Transketo_C/PFOR_II"/>
</dbReference>
<dbReference type="InterPro" id="IPR005475">
    <property type="entry name" value="Transketolase-like_Pyr-bd"/>
</dbReference>
<dbReference type="InterPro" id="IPR033248">
    <property type="entry name" value="Transketolase_C"/>
</dbReference>
<dbReference type="PANTHER" id="PTHR43257">
    <property type="entry name" value="PYRUVATE DEHYDROGENASE E1 COMPONENT BETA SUBUNIT"/>
    <property type="match status" value="1"/>
</dbReference>
<dbReference type="PANTHER" id="PTHR43257:SF2">
    <property type="entry name" value="PYRUVATE DEHYDROGENASE E1 COMPONENT SUBUNIT BETA"/>
    <property type="match status" value="1"/>
</dbReference>
<dbReference type="Pfam" id="PF02779">
    <property type="entry name" value="Transket_pyr"/>
    <property type="match status" value="1"/>
</dbReference>
<dbReference type="Pfam" id="PF02780">
    <property type="entry name" value="Transketolase_C"/>
    <property type="match status" value="1"/>
</dbReference>
<dbReference type="SMART" id="SM00861">
    <property type="entry name" value="Transket_pyr"/>
    <property type="match status" value="1"/>
</dbReference>
<dbReference type="SUPFAM" id="SSF52518">
    <property type="entry name" value="Thiamin diphosphate-binding fold (THDP-binding)"/>
    <property type="match status" value="1"/>
</dbReference>
<dbReference type="SUPFAM" id="SSF52922">
    <property type="entry name" value="TK C-terminal domain-like"/>
    <property type="match status" value="1"/>
</dbReference>
<proteinExistence type="evidence at protein level"/>
<protein>
    <recommendedName>
        <fullName>Pyruvate dehydrogenase E1 component subunit beta</fullName>
        <ecNumber>1.2.4.1</ecNumber>
    </recommendedName>
</protein>
<gene>
    <name type="primary">pdhB</name>
    <name type="ordered locus">MPN_392</name>
    <name type="ORF">MP446</name>
</gene>
<sequence length="327" mass="35914">MSKTIQANNIEALGNAMDLALERDPNVVLYGQDAGFEGGVFRATKGLQKKYGEERVWDCPIAEAAMAGIGVGAAIGGLKPIVEIQFSGFSFPAMFQIFTHAARIRNRSRGVYTCPIIVRMPMGGGIKALEHHSETLEAIYGQIAGLKTVMPSNPYDTKGLFLAAVESPDPVVFFEPKKLYRAFRQEIPADYYTVPIGQANLISQGNNLTIVSYGPTMFDLINMVYGGELKDKGIELIDLRTISPWDKETVFNSVKKTGRLLVVTEAAKTFTTSGEIIASVTEELFSYLKAAPQRVTGWDIVVPLARGEHYQFNLNARILEAVNQLLK</sequence>
<evidence type="ECO:0000250" key="1"/>
<name>ODPB_MYCPN</name>
<keyword id="KW-0560">Oxidoreductase</keyword>
<keyword id="KW-0670">Pyruvate</keyword>
<keyword id="KW-1185">Reference proteome</keyword>
<keyword id="KW-0786">Thiamine pyrophosphate</keyword>
<organism>
    <name type="scientific">Mycoplasma pneumoniae (strain ATCC 29342 / M129 / Subtype 1)</name>
    <name type="common">Mycoplasmoides pneumoniae</name>
    <dbReference type="NCBI Taxonomy" id="272634"/>
    <lineage>
        <taxon>Bacteria</taxon>
        <taxon>Bacillati</taxon>
        <taxon>Mycoplasmatota</taxon>
        <taxon>Mycoplasmoidales</taxon>
        <taxon>Mycoplasmoidaceae</taxon>
        <taxon>Mycoplasmoides</taxon>
    </lineage>
</organism>
<feature type="chain" id="PRO_0000162224" description="Pyruvate dehydrogenase E1 component subunit beta">
    <location>
        <begin position="1"/>
        <end position="327"/>
    </location>
</feature>
<feature type="binding site" evidence="1">
    <location>
        <position position="63"/>
    </location>
    <ligand>
        <name>thiamine diphosphate</name>
        <dbReference type="ChEBI" id="CHEBI:58937"/>
    </ligand>
</feature>
<reference key="1">
    <citation type="journal article" date="1996" name="Nucleic Acids Res.">
        <title>Complete sequence analysis of the genome of the bacterium Mycoplasma pneumoniae.</title>
        <authorList>
            <person name="Himmelreich R."/>
            <person name="Hilbert H."/>
            <person name="Plagens H."/>
            <person name="Pirkl E."/>
            <person name="Li B.-C."/>
            <person name="Herrmann R."/>
        </authorList>
    </citation>
    <scope>NUCLEOTIDE SEQUENCE [LARGE SCALE GENOMIC DNA]</scope>
    <source>
        <strain>ATCC 29342 / M129 / Subtype 1</strain>
    </source>
</reference>
<accession>P75391</accession>